<sequence length="455" mass="50567">MAKFDAHLKCSFCGKSQDQVRKLIAGPGVYICDECIDLCNEILDEELLDNQANTNNSPQVKKKLTNDNPKKSVPLELTSIPKPLEIKSFLDNQVVGQESAKKILSVAVYNHYKRLAWKVKEESKNSNSTDSQATKLQKSNILLIGPTGSGKTLLAQTLAEFLDVPFAVADATTLTEAGYVGEDVENILLRLLQKSEMNVELAQKGIIYIDEIDKIARKSENPSITRDVSGEGVQQALLKMLEGTIANVPPQGGRKHPYHDCIQIDTSQILFICGGAFIGLEDIVQKRMGKHSIGFTTNSDQNNVDTKKLVEPRDSLKNLELDDLVKYGLIPEFIGRIPVCAVLDRLTKETLESILTQPRDALVKQFKTLLSMDNVELKFEPDSVEAIANEAYKRKTGARALRSIIEELMLDVMYTLPSEKNVKEFTITKKMVDNLFSSKIVKLPSGSKRIIKESA</sequence>
<name>CLPX_PROM9</name>
<dbReference type="EMBL" id="CP000111">
    <property type="protein sequence ID" value="ABB50810.1"/>
    <property type="molecule type" value="Genomic_DNA"/>
</dbReference>
<dbReference type="RefSeq" id="WP_011377291.1">
    <property type="nucleotide sequence ID" value="NC_007577.1"/>
</dbReference>
<dbReference type="SMR" id="Q317Y5"/>
<dbReference type="STRING" id="74546.PMT9312_1749"/>
<dbReference type="KEGG" id="pmi:PMT9312_1749"/>
<dbReference type="eggNOG" id="COG1219">
    <property type="taxonomic scope" value="Bacteria"/>
</dbReference>
<dbReference type="HOGENOM" id="CLU_014218_8_2_3"/>
<dbReference type="OrthoDB" id="9804062at2"/>
<dbReference type="Proteomes" id="UP000002715">
    <property type="component" value="Chromosome"/>
</dbReference>
<dbReference type="GO" id="GO:0009376">
    <property type="term" value="C:HslUV protease complex"/>
    <property type="evidence" value="ECO:0007669"/>
    <property type="project" value="TreeGrafter"/>
</dbReference>
<dbReference type="GO" id="GO:0005524">
    <property type="term" value="F:ATP binding"/>
    <property type="evidence" value="ECO:0007669"/>
    <property type="project" value="UniProtKB-UniRule"/>
</dbReference>
<dbReference type="GO" id="GO:0016887">
    <property type="term" value="F:ATP hydrolysis activity"/>
    <property type="evidence" value="ECO:0007669"/>
    <property type="project" value="InterPro"/>
</dbReference>
<dbReference type="GO" id="GO:0140662">
    <property type="term" value="F:ATP-dependent protein folding chaperone"/>
    <property type="evidence" value="ECO:0007669"/>
    <property type="project" value="InterPro"/>
</dbReference>
<dbReference type="GO" id="GO:0046983">
    <property type="term" value="F:protein dimerization activity"/>
    <property type="evidence" value="ECO:0007669"/>
    <property type="project" value="InterPro"/>
</dbReference>
<dbReference type="GO" id="GO:0051082">
    <property type="term" value="F:unfolded protein binding"/>
    <property type="evidence" value="ECO:0007669"/>
    <property type="project" value="UniProtKB-UniRule"/>
</dbReference>
<dbReference type="GO" id="GO:0008270">
    <property type="term" value="F:zinc ion binding"/>
    <property type="evidence" value="ECO:0007669"/>
    <property type="project" value="InterPro"/>
</dbReference>
<dbReference type="GO" id="GO:0051301">
    <property type="term" value="P:cell division"/>
    <property type="evidence" value="ECO:0007669"/>
    <property type="project" value="TreeGrafter"/>
</dbReference>
<dbReference type="GO" id="GO:0051603">
    <property type="term" value="P:proteolysis involved in protein catabolic process"/>
    <property type="evidence" value="ECO:0007669"/>
    <property type="project" value="TreeGrafter"/>
</dbReference>
<dbReference type="CDD" id="cd19497">
    <property type="entry name" value="RecA-like_ClpX"/>
    <property type="match status" value="1"/>
</dbReference>
<dbReference type="FunFam" id="1.10.8.60:FF:000002">
    <property type="entry name" value="ATP-dependent Clp protease ATP-binding subunit ClpX"/>
    <property type="match status" value="1"/>
</dbReference>
<dbReference type="FunFam" id="3.40.50.300:FF:000005">
    <property type="entry name" value="ATP-dependent Clp protease ATP-binding subunit ClpX"/>
    <property type="match status" value="1"/>
</dbReference>
<dbReference type="Gene3D" id="1.10.8.60">
    <property type="match status" value="1"/>
</dbReference>
<dbReference type="Gene3D" id="6.20.220.10">
    <property type="entry name" value="ClpX chaperone, C4-type zinc finger domain"/>
    <property type="match status" value="1"/>
</dbReference>
<dbReference type="Gene3D" id="3.40.50.300">
    <property type="entry name" value="P-loop containing nucleotide triphosphate hydrolases"/>
    <property type="match status" value="1"/>
</dbReference>
<dbReference type="HAMAP" id="MF_00175">
    <property type="entry name" value="ClpX"/>
    <property type="match status" value="1"/>
</dbReference>
<dbReference type="InterPro" id="IPR003593">
    <property type="entry name" value="AAA+_ATPase"/>
</dbReference>
<dbReference type="InterPro" id="IPR050052">
    <property type="entry name" value="ATP-dep_Clp_protease_ClpX"/>
</dbReference>
<dbReference type="InterPro" id="IPR003959">
    <property type="entry name" value="ATPase_AAA_core"/>
</dbReference>
<dbReference type="InterPro" id="IPR019489">
    <property type="entry name" value="Clp_ATPase_C"/>
</dbReference>
<dbReference type="InterPro" id="IPR004487">
    <property type="entry name" value="Clp_protease_ATP-bd_su_ClpX"/>
</dbReference>
<dbReference type="InterPro" id="IPR046425">
    <property type="entry name" value="ClpX_bact"/>
</dbReference>
<dbReference type="InterPro" id="IPR027417">
    <property type="entry name" value="P-loop_NTPase"/>
</dbReference>
<dbReference type="InterPro" id="IPR010603">
    <property type="entry name" value="Znf_CppX_C4"/>
</dbReference>
<dbReference type="InterPro" id="IPR038366">
    <property type="entry name" value="Znf_CppX_C4_sf"/>
</dbReference>
<dbReference type="NCBIfam" id="TIGR00382">
    <property type="entry name" value="clpX"/>
    <property type="match status" value="1"/>
</dbReference>
<dbReference type="NCBIfam" id="NF003745">
    <property type="entry name" value="PRK05342.1"/>
    <property type="match status" value="1"/>
</dbReference>
<dbReference type="PANTHER" id="PTHR48102:SF7">
    <property type="entry name" value="ATP-DEPENDENT CLP PROTEASE ATP-BINDING SUBUNIT CLPX-LIKE, MITOCHONDRIAL"/>
    <property type="match status" value="1"/>
</dbReference>
<dbReference type="PANTHER" id="PTHR48102">
    <property type="entry name" value="ATP-DEPENDENT CLP PROTEASE ATP-BINDING SUBUNIT CLPX-LIKE, MITOCHONDRIAL-RELATED"/>
    <property type="match status" value="1"/>
</dbReference>
<dbReference type="Pfam" id="PF07724">
    <property type="entry name" value="AAA_2"/>
    <property type="match status" value="1"/>
</dbReference>
<dbReference type="Pfam" id="PF10431">
    <property type="entry name" value="ClpB_D2-small"/>
    <property type="match status" value="1"/>
</dbReference>
<dbReference type="Pfam" id="PF06689">
    <property type="entry name" value="zf-C4_ClpX"/>
    <property type="match status" value="1"/>
</dbReference>
<dbReference type="SMART" id="SM00382">
    <property type="entry name" value="AAA"/>
    <property type="match status" value="1"/>
</dbReference>
<dbReference type="SMART" id="SM01086">
    <property type="entry name" value="ClpB_D2-small"/>
    <property type="match status" value="1"/>
</dbReference>
<dbReference type="SMART" id="SM00994">
    <property type="entry name" value="zf-C4_ClpX"/>
    <property type="match status" value="1"/>
</dbReference>
<dbReference type="SUPFAM" id="SSF57716">
    <property type="entry name" value="Glucocorticoid receptor-like (DNA-binding domain)"/>
    <property type="match status" value="1"/>
</dbReference>
<dbReference type="SUPFAM" id="SSF52540">
    <property type="entry name" value="P-loop containing nucleoside triphosphate hydrolases"/>
    <property type="match status" value="1"/>
</dbReference>
<dbReference type="PROSITE" id="PS51902">
    <property type="entry name" value="CLPX_ZB"/>
    <property type="match status" value="1"/>
</dbReference>
<gene>
    <name evidence="1" type="primary">clpX</name>
    <name type="ordered locus">PMT9312_1749</name>
</gene>
<protein>
    <recommendedName>
        <fullName evidence="1">ATP-dependent Clp protease ATP-binding subunit ClpX</fullName>
    </recommendedName>
</protein>
<keyword id="KW-0067">ATP-binding</keyword>
<keyword id="KW-0143">Chaperone</keyword>
<keyword id="KW-0479">Metal-binding</keyword>
<keyword id="KW-0547">Nucleotide-binding</keyword>
<keyword id="KW-0862">Zinc</keyword>
<accession>Q317Y5</accession>
<reference key="1">
    <citation type="journal article" date="2006" name="Science">
        <title>Genomic islands and the ecology and evolution of Prochlorococcus.</title>
        <authorList>
            <person name="Coleman M.L."/>
            <person name="Sullivan M.B."/>
            <person name="Martiny A.C."/>
            <person name="Steglich C."/>
            <person name="Barry K."/>
            <person name="Delong E.F."/>
            <person name="Chisholm S.W."/>
        </authorList>
    </citation>
    <scope>NUCLEOTIDE SEQUENCE [LARGE SCALE GENOMIC DNA]</scope>
    <source>
        <strain>MIT 9312</strain>
    </source>
</reference>
<comment type="function">
    <text evidence="1">ATP-dependent specificity component of the Clp protease. It directs the protease to specific substrates. Can perform chaperone functions in the absence of ClpP.</text>
</comment>
<comment type="subunit">
    <text evidence="1">Component of the ClpX-ClpP complex. Forms a hexameric ring that, in the presence of ATP, binds to fourteen ClpP subunits assembled into a disk-like structure with a central cavity, resembling the structure of eukaryotic proteasomes.</text>
</comment>
<comment type="similarity">
    <text evidence="1">Belongs to the ClpX chaperone family.</text>
</comment>
<organism>
    <name type="scientific">Prochlorococcus marinus (strain MIT 9312)</name>
    <dbReference type="NCBI Taxonomy" id="74546"/>
    <lineage>
        <taxon>Bacteria</taxon>
        <taxon>Bacillati</taxon>
        <taxon>Cyanobacteriota</taxon>
        <taxon>Cyanophyceae</taxon>
        <taxon>Synechococcales</taxon>
        <taxon>Prochlorococcaceae</taxon>
        <taxon>Prochlorococcus</taxon>
    </lineage>
</organism>
<evidence type="ECO:0000255" key="1">
    <source>
        <dbReference type="HAMAP-Rule" id="MF_00175"/>
    </source>
</evidence>
<evidence type="ECO:0000255" key="2">
    <source>
        <dbReference type="PROSITE-ProRule" id="PRU01250"/>
    </source>
</evidence>
<evidence type="ECO:0000256" key="3">
    <source>
        <dbReference type="SAM" id="MobiDB-lite"/>
    </source>
</evidence>
<proteinExistence type="inferred from homology"/>
<feature type="chain" id="PRO_1000024616" description="ATP-dependent Clp protease ATP-binding subunit ClpX">
    <location>
        <begin position="1"/>
        <end position="455"/>
    </location>
</feature>
<feature type="domain" description="ClpX-type ZB" evidence="2">
    <location>
        <begin position="1"/>
        <end position="51"/>
    </location>
</feature>
<feature type="region of interest" description="Disordered" evidence="3">
    <location>
        <begin position="52"/>
        <end position="74"/>
    </location>
</feature>
<feature type="binding site" evidence="2">
    <location>
        <position position="10"/>
    </location>
    <ligand>
        <name>Zn(2+)</name>
        <dbReference type="ChEBI" id="CHEBI:29105"/>
    </ligand>
</feature>
<feature type="binding site" evidence="2">
    <location>
        <position position="13"/>
    </location>
    <ligand>
        <name>Zn(2+)</name>
        <dbReference type="ChEBI" id="CHEBI:29105"/>
    </ligand>
</feature>
<feature type="binding site" evidence="2">
    <location>
        <position position="32"/>
    </location>
    <ligand>
        <name>Zn(2+)</name>
        <dbReference type="ChEBI" id="CHEBI:29105"/>
    </ligand>
</feature>
<feature type="binding site" evidence="2">
    <location>
        <position position="35"/>
    </location>
    <ligand>
        <name>Zn(2+)</name>
        <dbReference type="ChEBI" id="CHEBI:29105"/>
    </ligand>
</feature>
<feature type="binding site" evidence="1">
    <location>
        <begin position="146"/>
        <end position="153"/>
    </location>
    <ligand>
        <name>ATP</name>
        <dbReference type="ChEBI" id="CHEBI:30616"/>
    </ligand>
</feature>